<protein>
    <recommendedName>
        <fullName evidence="1">Phenylalanine--tRNA ligase alpha subunit</fullName>
        <ecNumber evidence="1">6.1.1.20</ecNumber>
    </recommendedName>
    <alternativeName>
        <fullName evidence="1">Phenylalanyl-tRNA synthetase alpha subunit</fullName>
        <shortName evidence="1">PheRS</shortName>
    </alternativeName>
</protein>
<evidence type="ECO:0000255" key="1">
    <source>
        <dbReference type="HAMAP-Rule" id="MF_00281"/>
    </source>
</evidence>
<comment type="catalytic activity">
    <reaction evidence="1">
        <text>tRNA(Phe) + L-phenylalanine + ATP = L-phenylalanyl-tRNA(Phe) + AMP + diphosphate + H(+)</text>
        <dbReference type="Rhea" id="RHEA:19413"/>
        <dbReference type="Rhea" id="RHEA-COMP:9668"/>
        <dbReference type="Rhea" id="RHEA-COMP:9699"/>
        <dbReference type="ChEBI" id="CHEBI:15378"/>
        <dbReference type="ChEBI" id="CHEBI:30616"/>
        <dbReference type="ChEBI" id="CHEBI:33019"/>
        <dbReference type="ChEBI" id="CHEBI:58095"/>
        <dbReference type="ChEBI" id="CHEBI:78442"/>
        <dbReference type="ChEBI" id="CHEBI:78531"/>
        <dbReference type="ChEBI" id="CHEBI:456215"/>
        <dbReference type="EC" id="6.1.1.20"/>
    </reaction>
</comment>
<comment type="cofactor">
    <cofactor evidence="1">
        <name>Mg(2+)</name>
        <dbReference type="ChEBI" id="CHEBI:18420"/>
    </cofactor>
    <text evidence="1">Binds 2 magnesium ions per tetramer.</text>
</comment>
<comment type="subunit">
    <text evidence="1">Tetramer of two alpha and two beta subunits.</text>
</comment>
<comment type="subcellular location">
    <subcellularLocation>
        <location evidence="1">Cytoplasm</location>
    </subcellularLocation>
</comment>
<comment type="similarity">
    <text evidence="1">Belongs to the class-II aminoacyl-tRNA synthetase family. Phe-tRNA synthetase alpha subunit type 1 subfamily.</text>
</comment>
<gene>
    <name evidence="1" type="primary">pheS</name>
    <name type="ordered locus">SA0985</name>
</gene>
<feature type="chain" id="PRO_0000126761" description="Phenylalanine--tRNA ligase alpha subunit">
    <location>
        <begin position="1"/>
        <end position="352"/>
    </location>
</feature>
<feature type="binding site" evidence="1">
    <location>
        <position position="258"/>
    </location>
    <ligand>
        <name>Mg(2+)</name>
        <dbReference type="ChEBI" id="CHEBI:18420"/>
        <note>shared with beta subunit</note>
    </ligand>
</feature>
<reference key="1">
    <citation type="journal article" date="2001" name="Lancet">
        <title>Whole genome sequencing of meticillin-resistant Staphylococcus aureus.</title>
        <authorList>
            <person name="Kuroda M."/>
            <person name="Ohta T."/>
            <person name="Uchiyama I."/>
            <person name="Baba T."/>
            <person name="Yuzawa H."/>
            <person name="Kobayashi I."/>
            <person name="Cui L."/>
            <person name="Oguchi A."/>
            <person name="Aoki K."/>
            <person name="Nagai Y."/>
            <person name="Lian J.-Q."/>
            <person name="Ito T."/>
            <person name="Kanamori M."/>
            <person name="Matsumaru H."/>
            <person name="Maruyama A."/>
            <person name="Murakami H."/>
            <person name="Hosoyama A."/>
            <person name="Mizutani-Ui Y."/>
            <person name="Takahashi N.K."/>
            <person name="Sawano T."/>
            <person name="Inoue R."/>
            <person name="Kaito C."/>
            <person name="Sekimizu K."/>
            <person name="Hirakawa H."/>
            <person name="Kuhara S."/>
            <person name="Goto S."/>
            <person name="Yabuzaki J."/>
            <person name="Kanehisa M."/>
            <person name="Yamashita A."/>
            <person name="Oshima K."/>
            <person name="Furuya K."/>
            <person name="Yoshino C."/>
            <person name="Shiba T."/>
            <person name="Hattori M."/>
            <person name="Ogasawara N."/>
            <person name="Hayashi H."/>
            <person name="Hiramatsu K."/>
        </authorList>
    </citation>
    <scope>NUCLEOTIDE SEQUENCE [LARGE SCALE GENOMIC DNA]</scope>
    <source>
        <strain>N315</strain>
    </source>
</reference>
<sequence length="352" mass="40121">MSEQQTMSELKQQALVDINEANDERALQEVKVKYLGKKGSVSGLMKLMKDLPNEEKPAFGQKVNELRQTIQNELDERQQMLVKEKLNKQLAEETIDVSLPGRHIEIGSKHPLTRTIEEIEDLFLGLGYEIVNGYEVEQDHYNFEMLNLPKSHPARDMQDSFYITDEILLRTHTSPVQARTMESRHGQGPVKIICPGKVYRRDSDDATHSHQFTQIEGLVVDKNVKMSDLKGTLELLAKKLFGADREIRLRPSYFPFTEPSVEVDVSCFKCKGKGCNVCKHTGWIEILGAGMVHPNVLEMAGFDSSEYSGFAFGMGPDRIAMLKYGIEDIRHFYTNDVRFLDQFKAVEDRGDM</sequence>
<proteinExistence type="inferred from homology"/>
<keyword id="KW-0030">Aminoacyl-tRNA synthetase</keyword>
<keyword id="KW-0067">ATP-binding</keyword>
<keyword id="KW-0963">Cytoplasm</keyword>
<keyword id="KW-0436">Ligase</keyword>
<keyword id="KW-0460">Magnesium</keyword>
<keyword id="KW-0479">Metal-binding</keyword>
<keyword id="KW-0547">Nucleotide-binding</keyword>
<keyword id="KW-0648">Protein biosynthesis</keyword>
<name>SYFA_STAAN</name>
<dbReference type="EC" id="6.1.1.20" evidence="1"/>
<dbReference type="EMBL" id="BA000018">
    <property type="protein sequence ID" value="BAB42234.1"/>
    <property type="molecule type" value="Genomic_DNA"/>
</dbReference>
<dbReference type="PIR" id="F89884">
    <property type="entry name" value="F89884"/>
</dbReference>
<dbReference type="RefSeq" id="WP_000003566.1">
    <property type="nucleotide sequence ID" value="NC_002745.2"/>
</dbReference>
<dbReference type="SMR" id="P68848"/>
<dbReference type="EnsemblBacteria" id="BAB42234">
    <property type="protein sequence ID" value="BAB42234"/>
    <property type="gene ID" value="BAB42234"/>
</dbReference>
<dbReference type="KEGG" id="sau:SA0985"/>
<dbReference type="HOGENOM" id="CLU_025086_0_1_9"/>
<dbReference type="GO" id="GO:0005737">
    <property type="term" value="C:cytoplasm"/>
    <property type="evidence" value="ECO:0007669"/>
    <property type="project" value="UniProtKB-SubCell"/>
</dbReference>
<dbReference type="GO" id="GO:0005524">
    <property type="term" value="F:ATP binding"/>
    <property type="evidence" value="ECO:0007669"/>
    <property type="project" value="UniProtKB-UniRule"/>
</dbReference>
<dbReference type="GO" id="GO:0140096">
    <property type="term" value="F:catalytic activity, acting on a protein"/>
    <property type="evidence" value="ECO:0007669"/>
    <property type="project" value="UniProtKB-ARBA"/>
</dbReference>
<dbReference type="GO" id="GO:0000287">
    <property type="term" value="F:magnesium ion binding"/>
    <property type="evidence" value="ECO:0007669"/>
    <property type="project" value="UniProtKB-UniRule"/>
</dbReference>
<dbReference type="GO" id="GO:0004826">
    <property type="term" value="F:phenylalanine-tRNA ligase activity"/>
    <property type="evidence" value="ECO:0007669"/>
    <property type="project" value="UniProtKB-UniRule"/>
</dbReference>
<dbReference type="GO" id="GO:0016740">
    <property type="term" value="F:transferase activity"/>
    <property type="evidence" value="ECO:0007669"/>
    <property type="project" value="UniProtKB-ARBA"/>
</dbReference>
<dbReference type="GO" id="GO:0000049">
    <property type="term" value="F:tRNA binding"/>
    <property type="evidence" value="ECO:0007669"/>
    <property type="project" value="InterPro"/>
</dbReference>
<dbReference type="GO" id="GO:0006432">
    <property type="term" value="P:phenylalanyl-tRNA aminoacylation"/>
    <property type="evidence" value="ECO:0007669"/>
    <property type="project" value="UniProtKB-UniRule"/>
</dbReference>
<dbReference type="CDD" id="cd00496">
    <property type="entry name" value="PheRS_alpha_core"/>
    <property type="match status" value="1"/>
</dbReference>
<dbReference type="FunFam" id="3.30.930.10:FF:000003">
    <property type="entry name" value="Phenylalanine--tRNA ligase alpha subunit"/>
    <property type="match status" value="1"/>
</dbReference>
<dbReference type="Gene3D" id="3.30.930.10">
    <property type="entry name" value="Bira Bifunctional Protein, Domain 2"/>
    <property type="match status" value="1"/>
</dbReference>
<dbReference type="HAMAP" id="MF_00281">
    <property type="entry name" value="Phe_tRNA_synth_alpha1"/>
    <property type="match status" value="1"/>
</dbReference>
<dbReference type="InterPro" id="IPR006195">
    <property type="entry name" value="aa-tRNA-synth_II"/>
</dbReference>
<dbReference type="InterPro" id="IPR045864">
    <property type="entry name" value="aa-tRNA-synth_II/BPL/LPL"/>
</dbReference>
<dbReference type="InterPro" id="IPR004529">
    <property type="entry name" value="Phe-tRNA-synth_IIc_asu"/>
</dbReference>
<dbReference type="InterPro" id="IPR004188">
    <property type="entry name" value="Phe-tRNA_ligase_II_N"/>
</dbReference>
<dbReference type="InterPro" id="IPR022911">
    <property type="entry name" value="Phe_tRNA_ligase_alpha1_bac"/>
</dbReference>
<dbReference type="InterPro" id="IPR002319">
    <property type="entry name" value="Phenylalanyl-tRNA_Synthase"/>
</dbReference>
<dbReference type="InterPro" id="IPR010978">
    <property type="entry name" value="tRNA-bd_arm"/>
</dbReference>
<dbReference type="NCBIfam" id="TIGR00468">
    <property type="entry name" value="pheS"/>
    <property type="match status" value="1"/>
</dbReference>
<dbReference type="PANTHER" id="PTHR11538:SF41">
    <property type="entry name" value="PHENYLALANINE--TRNA LIGASE, MITOCHONDRIAL"/>
    <property type="match status" value="1"/>
</dbReference>
<dbReference type="PANTHER" id="PTHR11538">
    <property type="entry name" value="PHENYLALANYL-TRNA SYNTHETASE"/>
    <property type="match status" value="1"/>
</dbReference>
<dbReference type="Pfam" id="PF02912">
    <property type="entry name" value="Phe_tRNA-synt_N"/>
    <property type="match status" value="1"/>
</dbReference>
<dbReference type="Pfam" id="PF01409">
    <property type="entry name" value="tRNA-synt_2d"/>
    <property type="match status" value="1"/>
</dbReference>
<dbReference type="SUPFAM" id="SSF55681">
    <property type="entry name" value="Class II aaRS and biotin synthetases"/>
    <property type="match status" value="1"/>
</dbReference>
<dbReference type="SUPFAM" id="SSF46589">
    <property type="entry name" value="tRNA-binding arm"/>
    <property type="match status" value="1"/>
</dbReference>
<dbReference type="PROSITE" id="PS50862">
    <property type="entry name" value="AA_TRNA_LIGASE_II"/>
    <property type="match status" value="1"/>
</dbReference>
<accession>P68848</accession>
<accession>Q99QR1</accession>
<organism>
    <name type="scientific">Staphylococcus aureus (strain N315)</name>
    <dbReference type="NCBI Taxonomy" id="158879"/>
    <lineage>
        <taxon>Bacteria</taxon>
        <taxon>Bacillati</taxon>
        <taxon>Bacillota</taxon>
        <taxon>Bacilli</taxon>
        <taxon>Bacillales</taxon>
        <taxon>Staphylococcaceae</taxon>
        <taxon>Staphylococcus</taxon>
    </lineage>
</organism>